<keyword id="KW-0687">Ribonucleoprotein</keyword>
<keyword id="KW-0689">Ribosomal protein</keyword>
<keyword id="KW-0694">RNA-binding</keyword>
<keyword id="KW-0699">rRNA-binding</keyword>
<proteinExistence type="inferred from homology"/>
<dbReference type="EMBL" id="M74770">
    <property type="protein sequence ID" value="AAA25328.1"/>
    <property type="molecule type" value="Genomic_DNA"/>
</dbReference>
<dbReference type="SMR" id="Q50265"/>
<dbReference type="GO" id="GO:0005737">
    <property type="term" value="C:cytoplasm"/>
    <property type="evidence" value="ECO:0007669"/>
    <property type="project" value="UniProtKB-ARBA"/>
</dbReference>
<dbReference type="GO" id="GO:0015935">
    <property type="term" value="C:small ribosomal subunit"/>
    <property type="evidence" value="ECO:0007669"/>
    <property type="project" value="InterPro"/>
</dbReference>
<dbReference type="GO" id="GO:0019843">
    <property type="term" value="F:rRNA binding"/>
    <property type="evidence" value="ECO:0007669"/>
    <property type="project" value="UniProtKB-UniRule"/>
</dbReference>
<dbReference type="GO" id="GO:0003735">
    <property type="term" value="F:structural constituent of ribosome"/>
    <property type="evidence" value="ECO:0007669"/>
    <property type="project" value="InterPro"/>
</dbReference>
<dbReference type="GO" id="GO:0000028">
    <property type="term" value="P:ribosomal small subunit assembly"/>
    <property type="evidence" value="ECO:0007669"/>
    <property type="project" value="TreeGrafter"/>
</dbReference>
<dbReference type="GO" id="GO:0006412">
    <property type="term" value="P:translation"/>
    <property type="evidence" value="ECO:0007669"/>
    <property type="project" value="UniProtKB-UniRule"/>
</dbReference>
<dbReference type="FunFam" id="3.30.860.10:FF:000001">
    <property type="entry name" value="30S ribosomal protein S19"/>
    <property type="match status" value="1"/>
</dbReference>
<dbReference type="Gene3D" id="3.30.860.10">
    <property type="entry name" value="30s Ribosomal Protein S19, Chain A"/>
    <property type="match status" value="1"/>
</dbReference>
<dbReference type="HAMAP" id="MF_00531">
    <property type="entry name" value="Ribosomal_uS19"/>
    <property type="match status" value="1"/>
</dbReference>
<dbReference type="InterPro" id="IPR002222">
    <property type="entry name" value="Ribosomal_uS19"/>
</dbReference>
<dbReference type="InterPro" id="IPR005732">
    <property type="entry name" value="Ribosomal_uS19_bac-type"/>
</dbReference>
<dbReference type="InterPro" id="IPR020934">
    <property type="entry name" value="Ribosomal_uS19_CS"/>
</dbReference>
<dbReference type="InterPro" id="IPR023575">
    <property type="entry name" value="Ribosomal_uS19_SF"/>
</dbReference>
<dbReference type="NCBIfam" id="TIGR01050">
    <property type="entry name" value="rpsS_bact"/>
    <property type="match status" value="1"/>
</dbReference>
<dbReference type="PANTHER" id="PTHR11880">
    <property type="entry name" value="RIBOSOMAL PROTEIN S19P FAMILY MEMBER"/>
    <property type="match status" value="1"/>
</dbReference>
<dbReference type="PANTHER" id="PTHR11880:SF8">
    <property type="entry name" value="SMALL RIBOSOMAL SUBUNIT PROTEIN US19M"/>
    <property type="match status" value="1"/>
</dbReference>
<dbReference type="Pfam" id="PF00203">
    <property type="entry name" value="Ribosomal_S19"/>
    <property type="match status" value="1"/>
</dbReference>
<dbReference type="PIRSF" id="PIRSF002144">
    <property type="entry name" value="Ribosomal_S19"/>
    <property type="match status" value="1"/>
</dbReference>
<dbReference type="PRINTS" id="PR00975">
    <property type="entry name" value="RIBOSOMALS19"/>
</dbReference>
<dbReference type="SUPFAM" id="SSF54570">
    <property type="entry name" value="Ribosomal protein S19"/>
    <property type="match status" value="1"/>
</dbReference>
<dbReference type="PROSITE" id="PS00323">
    <property type="entry name" value="RIBOSOMAL_S19"/>
    <property type="match status" value="1"/>
</dbReference>
<organism>
    <name type="scientific">Aster yellows phytoplasma</name>
    <dbReference type="NCBI Taxonomy" id="35779"/>
    <lineage>
        <taxon>Bacteria</taxon>
        <taxon>Bacillati</taxon>
        <taxon>Mycoplasmatota</taxon>
        <taxon>Mollicutes</taxon>
        <taxon>Acholeplasmatales</taxon>
        <taxon>Acholeplasmataceae</taxon>
        <taxon>Candidatus Phytoplasma</taxon>
        <taxon>16SrI (Aster yellows group)</taxon>
    </lineage>
</organism>
<reference key="1">
    <citation type="journal article" date="1991" name="FEMS Microbiol. Lett.">
        <title>DNA sequence of the ribosomal protein genes rpl2 and rps19 from a plant-pathogenic mycoplasma-like organism.</title>
        <authorList>
            <person name="Lim P.O."/>
            <person name="Sears B.B."/>
        </authorList>
    </citation>
    <scope>NUCLEOTIDE SEQUENCE [GENOMIC DNA]</scope>
</reference>
<name>RS19_ASTYP</name>
<evidence type="ECO:0000250" key="1"/>
<evidence type="ECO:0000256" key="2">
    <source>
        <dbReference type="SAM" id="MobiDB-lite"/>
    </source>
</evidence>
<evidence type="ECO:0000305" key="3"/>
<sequence length="93" mass="10690">MPRSVKKGPIVASHLLAKIEKQKNLKNKKVIQTWSRSSTITPIFVGHKIAVYNGREHIPVYITENMVGHKLGEFSPTRTYRGHNKKDKKIQKK</sequence>
<accession>Q50265</accession>
<protein>
    <recommendedName>
        <fullName evidence="3">Small ribosomal subunit protein uS19</fullName>
    </recommendedName>
    <alternativeName>
        <fullName>30S ribosomal protein S19</fullName>
    </alternativeName>
</protein>
<comment type="function">
    <text evidence="1">Protein S19 forms a complex with S13 that binds strongly to the 16S ribosomal RNA.</text>
</comment>
<comment type="similarity">
    <text evidence="3">Belongs to the universal ribosomal protein uS19 family.</text>
</comment>
<gene>
    <name type="primary">rpsS</name>
    <name type="synonym">rps19</name>
</gene>
<feature type="chain" id="PRO_0000129770" description="Small ribosomal subunit protein uS19">
    <location>
        <begin position="1"/>
        <end position="93"/>
    </location>
</feature>
<feature type="region of interest" description="Disordered" evidence="2">
    <location>
        <begin position="73"/>
        <end position="93"/>
    </location>
</feature>
<feature type="compositionally biased region" description="Basic residues" evidence="2">
    <location>
        <begin position="80"/>
        <end position="93"/>
    </location>
</feature>